<accession>Q3JR65</accession>
<organism>
    <name type="scientific">Burkholderia pseudomallei (strain 1710b)</name>
    <dbReference type="NCBI Taxonomy" id="320372"/>
    <lineage>
        <taxon>Bacteria</taxon>
        <taxon>Pseudomonadati</taxon>
        <taxon>Pseudomonadota</taxon>
        <taxon>Betaproteobacteria</taxon>
        <taxon>Burkholderiales</taxon>
        <taxon>Burkholderiaceae</taxon>
        <taxon>Burkholderia</taxon>
        <taxon>pseudomallei group</taxon>
    </lineage>
</organism>
<evidence type="ECO:0000255" key="1">
    <source>
        <dbReference type="HAMAP-Rule" id="MF_00344"/>
    </source>
</evidence>
<comment type="function">
    <text evidence="1">Catalyzes the synthesis of GMP from XMP.</text>
</comment>
<comment type="catalytic activity">
    <reaction evidence="1">
        <text>XMP + L-glutamine + ATP + H2O = GMP + L-glutamate + AMP + diphosphate + 2 H(+)</text>
        <dbReference type="Rhea" id="RHEA:11680"/>
        <dbReference type="ChEBI" id="CHEBI:15377"/>
        <dbReference type="ChEBI" id="CHEBI:15378"/>
        <dbReference type="ChEBI" id="CHEBI:29985"/>
        <dbReference type="ChEBI" id="CHEBI:30616"/>
        <dbReference type="ChEBI" id="CHEBI:33019"/>
        <dbReference type="ChEBI" id="CHEBI:57464"/>
        <dbReference type="ChEBI" id="CHEBI:58115"/>
        <dbReference type="ChEBI" id="CHEBI:58359"/>
        <dbReference type="ChEBI" id="CHEBI:456215"/>
        <dbReference type="EC" id="6.3.5.2"/>
    </reaction>
</comment>
<comment type="pathway">
    <text evidence="1">Purine metabolism; GMP biosynthesis; GMP from XMP (L-Gln route): step 1/1.</text>
</comment>
<comment type="subunit">
    <text evidence="1">Homodimer.</text>
</comment>
<sequence length="547" mass="60174">MFLSPSAAMHDKILILDFGSQVTQLIARRVREAHVYCEIHPNDVSDDFVREFAPKGVILSGSHASTYEDHQLRAPQAVWDLGVPVLGICYGMQTMAVQLGGKVEWSDHREFGYAEVRAHGRTRLLDGIQDFATPEGHGMLKVWMSHGDKVGEMPPGFALMASTPSCPIAGMADEARGYYAVQFHPEVTHTVQGRKLLERFVLDIAGAKPDWIMRDHIEEAVARIREQVGDEEVILGLSGGVDSSVAAALIHRAIGDQLTCVFVDHGLLRLNEGKMVLDMFEGRLHAKVVHVDASEQFLGHLAGVADPEHKRKIIGREFVEVFQAEAKKLTNAKWLAQGTIYPDVIESGGAKTKKATTIKSHHNVGGLPETLGLKLLEPLRDLFKDEVRELGVALGLPAEMVYRHPFPGPGLGVRILGEVKRDYAELLRRADAIFIEELCGTLATEQDAAAGLCEPSQVGKSWYDLTSQAFAVFLPVKSVGVMGDGRTYDYVAALRAVQTTDFMTAHWAHLPYALLGRASNRIINEVRGINRVVYDVSGKPPATIEWE</sequence>
<keyword id="KW-0067">ATP-binding</keyword>
<keyword id="KW-0315">Glutamine amidotransferase</keyword>
<keyword id="KW-0332">GMP biosynthesis</keyword>
<keyword id="KW-0436">Ligase</keyword>
<keyword id="KW-0547">Nucleotide-binding</keyword>
<keyword id="KW-0658">Purine biosynthesis</keyword>
<protein>
    <recommendedName>
        <fullName evidence="1">GMP synthase [glutamine-hydrolyzing]</fullName>
        <ecNumber evidence="1">6.3.5.2</ecNumber>
    </recommendedName>
    <alternativeName>
        <fullName evidence="1">GMP synthetase</fullName>
    </alternativeName>
    <alternativeName>
        <fullName evidence="1">Glutamine amidotransferase</fullName>
    </alternativeName>
</protein>
<feature type="chain" id="PRO_0000229413" description="GMP synthase [glutamine-hydrolyzing]">
    <location>
        <begin position="1"/>
        <end position="547"/>
    </location>
</feature>
<feature type="domain" description="Glutamine amidotransferase type-1" evidence="1">
    <location>
        <begin position="12"/>
        <end position="210"/>
    </location>
</feature>
<feature type="domain" description="GMPS ATP-PPase" evidence="1">
    <location>
        <begin position="211"/>
        <end position="403"/>
    </location>
</feature>
<feature type="active site" description="Nucleophile" evidence="1">
    <location>
        <position position="89"/>
    </location>
</feature>
<feature type="active site" evidence="1">
    <location>
        <position position="184"/>
    </location>
</feature>
<feature type="active site" evidence="1">
    <location>
        <position position="186"/>
    </location>
</feature>
<feature type="binding site" evidence="1">
    <location>
        <begin position="238"/>
        <end position="244"/>
    </location>
    <ligand>
        <name>ATP</name>
        <dbReference type="ChEBI" id="CHEBI:30616"/>
    </ligand>
</feature>
<proteinExistence type="inferred from homology"/>
<name>GUAA_BURP1</name>
<reference key="1">
    <citation type="journal article" date="2010" name="Genome Biol. Evol.">
        <title>Continuing evolution of Burkholderia mallei through genome reduction and large-scale rearrangements.</title>
        <authorList>
            <person name="Losada L."/>
            <person name="Ronning C.M."/>
            <person name="DeShazer D."/>
            <person name="Woods D."/>
            <person name="Fedorova N."/>
            <person name="Kim H.S."/>
            <person name="Shabalina S.A."/>
            <person name="Pearson T.R."/>
            <person name="Brinkac L."/>
            <person name="Tan P."/>
            <person name="Nandi T."/>
            <person name="Crabtree J."/>
            <person name="Badger J."/>
            <person name="Beckstrom-Sternberg S."/>
            <person name="Saqib M."/>
            <person name="Schutzer S.E."/>
            <person name="Keim P."/>
            <person name="Nierman W.C."/>
        </authorList>
    </citation>
    <scope>NUCLEOTIDE SEQUENCE [LARGE SCALE GENOMIC DNA]</scope>
    <source>
        <strain>1710b</strain>
    </source>
</reference>
<gene>
    <name evidence="1" type="primary">guaA</name>
    <name type="ordered locus">BURPS1710b_2546</name>
</gene>
<dbReference type="EC" id="6.3.5.2" evidence="1"/>
<dbReference type="EMBL" id="CP000124">
    <property type="protein sequence ID" value="ABA49585.1"/>
    <property type="molecule type" value="Genomic_DNA"/>
</dbReference>
<dbReference type="SMR" id="Q3JR65"/>
<dbReference type="MEROPS" id="C26.957"/>
<dbReference type="EnsemblBacteria" id="ABA49585">
    <property type="protein sequence ID" value="ABA49585"/>
    <property type="gene ID" value="BURPS1710b_2546"/>
</dbReference>
<dbReference type="KEGG" id="bpm:BURPS1710b_2546"/>
<dbReference type="HOGENOM" id="CLU_014340_0_5_4"/>
<dbReference type="UniPathway" id="UPA00189">
    <property type="reaction ID" value="UER00296"/>
</dbReference>
<dbReference type="Proteomes" id="UP000002700">
    <property type="component" value="Chromosome I"/>
</dbReference>
<dbReference type="GO" id="GO:0005829">
    <property type="term" value="C:cytosol"/>
    <property type="evidence" value="ECO:0007669"/>
    <property type="project" value="TreeGrafter"/>
</dbReference>
<dbReference type="GO" id="GO:0005524">
    <property type="term" value="F:ATP binding"/>
    <property type="evidence" value="ECO:0007669"/>
    <property type="project" value="UniProtKB-UniRule"/>
</dbReference>
<dbReference type="GO" id="GO:0003921">
    <property type="term" value="F:GMP synthase activity"/>
    <property type="evidence" value="ECO:0007669"/>
    <property type="project" value="InterPro"/>
</dbReference>
<dbReference type="CDD" id="cd01742">
    <property type="entry name" value="GATase1_GMP_Synthase"/>
    <property type="match status" value="1"/>
</dbReference>
<dbReference type="CDD" id="cd01997">
    <property type="entry name" value="GMP_synthase_C"/>
    <property type="match status" value="1"/>
</dbReference>
<dbReference type="FunFam" id="3.30.300.10:FF:000002">
    <property type="entry name" value="GMP synthase [glutamine-hydrolyzing]"/>
    <property type="match status" value="1"/>
</dbReference>
<dbReference type="FunFam" id="3.40.50.620:FF:000001">
    <property type="entry name" value="GMP synthase [glutamine-hydrolyzing]"/>
    <property type="match status" value="1"/>
</dbReference>
<dbReference type="FunFam" id="3.40.50.880:FF:000001">
    <property type="entry name" value="GMP synthase [glutamine-hydrolyzing]"/>
    <property type="match status" value="1"/>
</dbReference>
<dbReference type="Gene3D" id="3.30.300.10">
    <property type="match status" value="1"/>
</dbReference>
<dbReference type="Gene3D" id="3.40.50.880">
    <property type="match status" value="1"/>
</dbReference>
<dbReference type="Gene3D" id="3.40.50.620">
    <property type="entry name" value="HUPs"/>
    <property type="match status" value="1"/>
</dbReference>
<dbReference type="HAMAP" id="MF_00344">
    <property type="entry name" value="GMP_synthase"/>
    <property type="match status" value="1"/>
</dbReference>
<dbReference type="InterPro" id="IPR029062">
    <property type="entry name" value="Class_I_gatase-like"/>
</dbReference>
<dbReference type="InterPro" id="IPR017926">
    <property type="entry name" value="GATASE"/>
</dbReference>
<dbReference type="InterPro" id="IPR001674">
    <property type="entry name" value="GMP_synth_C"/>
</dbReference>
<dbReference type="InterPro" id="IPR004739">
    <property type="entry name" value="GMP_synth_GATase"/>
</dbReference>
<dbReference type="InterPro" id="IPR022955">
    <property type="entry name" value="GMP_synthase"/>
</dbReference>
<dbReference type="InterPro" id="IPR025777">
    <property type="entry name" value="GMPS_ATP_PPase_dom"/>
</dbReference>
<dbReference type="InterPro" id="IPR022310">
    <property type="entry name" value="NAD/GMP_synthase"/>
</dbReference>
<dbReference type="InterPro" id="IPR014729">
    <property type="entry name" value="Rossmann-like_a/b/a_fold"/>
</dbReference>
<dbReference type="NCBIfam" id="TIGR00884">
    <property type="entry name" value="guaA_Cterm"/>
    <property type="match status" value="1"/>
</dbReference>
<dbReference type="NCBIfam" id="TIGR00888">
    <property type="entry name" value="guaA_Nterm"/>
    <property type="match status" value="1"/>
</dbReference>
<dbReference type="NCBIfam" id="NF000848">
    <property type="entry name" value="PRK00074.1"/>
    <property type="match status" value="1"/>
</dbReference>
<dbReference type="PANTHER" id="PTHR11922:SF2">
    <property type="entry name" value="GMP SYNTHASE [GLUTAMINE-HYDROLYZING]"/>
    <property type="match status" value="1"/>
</dbReference>
<dbReference type="PANTHER" id="PTHR11922">
    <property type="entry name" value="GMP SYNTHASE-RELATED"/>
    <property type="match status" value="1"/>
</dbReference>
<dbReference type="Pfam" id="PF00117">
    <property type="entry name" value="GATase"/>
    <property type="match status" value="1"/>
</dbReference>
<dbReference type="Pfam" id="PF00958">
    <property type="entry name" value="GMP_synt_C"/>
    <property type="match status" value="1"/>
</dbReference>
<dbReference type="Pfam" id="PF02540">
    <property type="entry name" value="NAD_synthase"/>
    <property type="match status" value="1"/>
</dbReference>
<dbReference type="SUPFAM" id="SSF52402">
    <property type="entry name" value="Adenine nucleotide alpha hydrolases-like"/>
    <property type="match status" value="1"/>
</dbReference>
<dbReference type="SUPFAM" id="SSF52317">
    <property type="entry name" value="Class I glutamine amidotransferase-like"/>
    <property type="match status" value="1"/>
</dbReference>
<dbReference type="SUPFAM" id="SSF54810">
    <property type="entry name" value="GMP synthetase C-terminal dimerisation domain"/>
    <property type="match status" value="1"/>
</dbReference>
<dbReference type="PROSITE" id="PS51273">
    <property type="entry name" value="GATASE_TYPE_1"/>
    <property type="match status" value="1"/>
</dbReference>
<dbReference type="PROSITE" id="PS51553">
    <property type="entry name" value="GMPS_ATP_PPASE"/>
    <property type="match status" value="1"/>
</dbReference>